<protein>
    <recommendedName>
        <fullName evidence="10">Gamma-aminobutyric acid receptor subunit alpha-6</fullName>
    </recommendedName>
    <alternativeName>
        <fullName>GABA(A) receptor subunit alpha-6</fullName>
        <shortName>GABAAR subunit alpha-6</shortName>
    </alternativeName>
</protein>
<gene>
    <name evidence="12" type="primary">GABRA6</name>
</gene>
<reference key="1">
    <citation type="journal article" date="1996" name="Mol. Pharmacol.">
        <title>Cloning of cDNAs encoding the human gamma-aminobutyric acid type A receptor alpha 6 subunit and characterization of the pharmacology of alpha 6-containing receptors.</title>
        <authorList>
            <person name="Hadingham K.L."/>
            <person name="Garrett E.M."/>
            <person name="Wafford K.A."/>
            <person name="Bain C."/>
            <person name="Heavens R.P."/>
            <person name="Sirinathsinghji D.J."/>
            <person name="Whiting P.J."/>
        </authorList>
    </citation>
    <scope>NUCLEOTIDE SEQUENCE [MRNA]</scope>
    <scope>FUNCTION</scope>
    <scope>TISSUE SPECIFICITY</scope>
    <source>
        <tissue>Cerebellum</tissue>
    </source>
</reference>
<reference key="2">
    <citation type="journal article" date="2004" name="Nat. Genet.">
        <title>Complete sequencing and characterization of 21,243 full-length human cDNAs.</title>
        <authorList>
            <person name="Ota T."/>
            <person name="Suzuki Y."/>
            <person name="Nishikawa T."/>
            <person name="Otsuki T."/>
            <person name="Sugiyama T."/>
            <person name="Irie R."/>
            <person name="Wakamatsu A."/>
            <person name="Hayashi K."/>
            <person name="Sato H."/>
            <person name="Nagai K."/>
            <person name="Kimura K."/>
            <person name="Makita H."/>
            <person name="Sekine M."/>
            <person name="Obayashi M."/>
            <person name="Nishi T."/>
            <person name="Shibahara T."/>
            <person name="Tanaka T."/>
            <person name="Ishii S."/>
            <person name="Yamamoto J."/>
            <person name="Saito K."/>
            <person name="Kawai Y."/>
            <person name="Isono Y."/>
            <person name="Nakamura Y."/>
            <person name="Nagahari K."/>
            <person name="Murakami K."/>
            <person name="Yasuda T."/>
            <person name="Iwayanagi T."/>
            <person name="Wagatsuma M."/>
            <person name="Shiratori A."/>
            <person name="Sudo H."/>
            <person name="Hosoiri T."/>
            <person name="Kaku Y."/>
            <person name="Kodaira H."/>
            <person name="Kondo H."/>
            <person name="Sugawara M."/>
            <person name="Takahashi M."/>
            <person name="Kanda K."/>
            <person name="Yokoi T."/>
            <person name="Furuya T."/>
            <person name="Kikkawa E."/>
            <person name="Omura Y."/>
            <person name="Abe K."/>
            <person name="Kamihara K."/>
            <person name="Katsuta N."/>
            <person name="Sato K."/>
            <person name="Tanikawa M."/>
            <person name="Yamazaki M."/>
            <person name="Ninomiya K."/>
            <person name="Ishibashi T."/>
            <person name="Yamashita H."/>
            <person name="Murakawa K."/>
            <person name="Fujimori K."/>
            <person name="Tanai H."/>
            <person name="Kimata M."/>
            <person name="Watanabe M."/>
            <person name="Hiraoka S."/>
            <person name="Chiba Y."/>
            <person name="Ishida S."/>
            <person name="Ono Y."/>
            <person name="Takiguchi S."/>
            <person name="Watanabe S."/>
            <person name="Yosida M."/>
            <person name="Hotuta T."/>
            <person name="Kusano J."/>
            <person name="Kanehori K."/>
            <person name="Takahashi-Fujii A."/>
            <person name="Hara H."/>
            <person name="Tanase T.-O."/>
            <person name="Nomura Y."/>
            <person name="Togiya S."/>
            <person name="Komai F."/>
            <person name="Hara R."/>
            <person name="Takeuchi K."/>
            <person name="Arita M."/>
            <person name="Imose N."/>
            <person name="Musashino K."/>
            <person name="Yuuki H."/>
            <person name="Oshima A."/>
            <person name="Sasaki N."/>
            <person name="Aotsuka S."/>
            <person name="Yoshikawa Y."/>
            <person name="Matsunawa H."/>
            <person name="Ichihara T."/>
            <person name="Shiohata N."/>
            <person name="Sano S."/>
            <person name="Moriya S."/>
            <person name="Momiyama H."/>
            <person name="Satoh N."/>
            <person name="Takami S."/>
            <person name="Terashima Y."/>
            <person name="Suzuki O."/>
            <person name="Nakagawa S."/>
            <person name="Senoh A."/>
            <person name="Mizoguchi H."/>
            <person name="Goto Y."/>
            <person name="Shimizu F."/>
            <person name="Wakebe H."/>
            <person name="Hishigaki H."/>
            <person name="Watanabe T."/>
            <person name="Sugiyama A."/>
            <person name="Takemoto M."/>
            <person name="Kawakami B."/>
            <person name="Yamazaki M."/>
            <person name="Watanabe K."/>
            <person name="Kumagai A."/>
            <person name="Itakura S."/>
            <person name="Fukuzumi Y."/>
            <person name="Fujimori Y."/>
            <person name="Komiyama M."/>
            <person name="Tashiro H."/>
            <person name="Tanigami A."/>
            <person name="Fujiwara T."/>
            <person name="Ono T."/>
            <person name="Yamada K."/>
            <person name="Fujii Y."/>
            <person name="Ozaki K."/>
            <person name="Hirao M."/>
            <person name="Ohmori Y."/>
            <person name="Kawabata A."/>
            <person name="Hikiji T."/>
            <person name="Kobatake N."/>
            <person name="Inagaki H."/>
            <person name="Ikema Y."/>
            <person name="Okamoto S."/>
            <person name="Okitani R."/>
            <person name="Kawakami T."/>
            <person name="Noguchi S."/>
            <person name="Itoh T."/>
            <person name="Shigeta K."/>
            <person name="Senba T."/>
            <person name="Matsumura K."/>
            <person name="Nakajima Y."/>
            <person name="Mizuno T."/>
            <person name="Morinaga M."/>
            <person name="Sasaki M."/>
            <person name="Togashi T."/>
            <person name="Oyama M."/>
            <person name="Hata H."/>
            <person name="Watanabe M."/>
            <person name="Komatsu T."/>
            <person name="Mizushima-Sugano J."/>
            <person name="Satoh T."/>
            <person name="Shirai Y."/>
            <person name="Takahashi Y."/>
            <person name="Nakagawa K."/>
            <person name="Okumura K."/>
            <person name="Nagase T."/>
            <person name="Nomura N."/>
            <person name="Kikuchi H."/>
            <person name="Masuho Y."/>
            <person name="Yamashita R."/>
            <person name="Nakai K."/>
            <person name="Yada T."/>
            <person name="Nakamura Y."/>
            <person name="Ohara O."/>
            <person name="Isogai T."/>
            <person name="Sugano S."/>
        </authorList>
    </citation>
    <scope>NUCLEOTIDE SEQUENCE [LARGE SCALE MRNA]</scope>
    <source>
        <tissue>Cerebellum</tissue>
    </source>
</reference>
<reference key="3">
    <citation type="submission" date="2005-09" db="EMBL/GenBank/DDBJ databases">
        <authorList>
            <person name="Mural R.J."/>
            <person name="Istrail S."/>
            <person name="Sutton G.G."/>
            <person name="Florea L."/>
            <person name="Halpern A.L."/>
            <person name="Mobarry C.M."/>
            <person name="Lippert R."/>
            <person name="Walenz B."/>
            <person name="Shatkay H."/>
            <person name="Dew I."/>
            <person name="Miller J.R."/>
            <person name="Flanigan M.J."/>
            <person name="Edwards N.J."/>
            <person name="Bolanos R."/>
            <person name="Fasulo D."/>
            <person name="Halldorsson B.V."/>
            <person name="Hannenhalli S."/>
            <person name="Turner R."/>
            <person name="Yooseph S."/>
            <person name="Lu F."/>
            <person name="Nusskern D.R."/>
            <person name="Shue B.C."/>
            <person name="Zheng X.H."/>
            <person name="Zhong F."/>
            <person name="Delcher A.L."/>
            <person name="Huson D.H."/>
            <person name="Kravitz S.A."/>
            <person name="Mouchard L."/>
            <person name="Reinert K."/>
            <person name="Remington K.A."/>
            <person name="Clark A.G."/>
            <person name="Waterman M.S."/>
            <person name="Eichler E.E."/>
            <person name="Adams M.D."/>
            <person name="Hunkapiller M.W."/>
            <person name="Myers E.W."/>
            <person name="Venter J.C."/>
        </authorList>
    </citation>
    <scope>NUCLEOTIDE SEQUENCE [LARGE SCALE GENOMIC DNA]</scope>
</reference>
<reference key="4">
    <citation type="journal article" date="2004" name="Genome Res.">
        <title>The status, quality, and expansion of the NIH full-length cDNA project: the Mammalian Gene Collection (MGC).</title>
        <authorList>
            <consortium name="The MGC Project Team"/>
        </authorList>
    </citation>
    <scope>NUCLEOTIDE SEQUENCE [LARGE SCALE MRNA]</scope>
</reference>
<reference key="5">
    <citation type="journal article" date="2006" name="Science">
        <title>The consensus coding sequences of human breast and colorectal cancers.</title>
        <authorList>
            <person name="Sjoeblom T."/>
            <person name="Jones S."/>
            <person name="Wood L.D."/>
            <person name="Parsons D.W."/>
            <person name="Lin J."/>
            <person name="Barber T.D."/>
            <person name="Mandelker D."/>
            <person name="Leary R.J."/>
            <person name="Ptak J."/>
            <person name="Silliman N."/>
            <person name="Szabo S."/>
            <person name="Buckhaults P."/>
            <person name="Farrell C."/>
            <person name="Meeh P."/>
            <person name="Markowitz S.D."/>
            <person name="Willis J."/>
            <person name="Dawson D."/>
            <person name="Willson J.K.V."/>
            <person name="Gazdar A.F."/>
            <person name="Hartigan J."/>
            <person name="Wu L."/>
            <person name="Liu C."/>
            <person name="Parmigiani G."/>
            <person name="Park B.H."/>
            <person name="Bachman K.E."/>
            <person name="Papadopoulos N."/>
            <person name="Vogelstein B."/>
            <person name="Kinzler K.W."/>
            <person name="Velculescu V.E."/>
        </authorList>
    </citation>
    <scope>VARIANT [LARGE SCALE ANALYSIS] HIS-180</scope>
</reference>
<keyword id="KW-1003">Cell membrane</keyword>
<keyword id="KW-0868">Chloride</keyword>
<keyword id="KW-0869">Chloride channel</keyword>
<keyword id="KW-1015">Disulfide bond</keyword>
<keyword id="KW-0325">Glycoprotein</keyword>
<keyword id="KW-0407">Ion channel</keyword>
<keyword id="KW-0406">Ion transport</keyword>
<keyword id="KW-1071">Ligand-gated ion channel</keyword>
<keyword id="KW-0472">Membrane</keyword>
<keyword id="KW-0597">Phosphoprotein</keyword>
<keyword id="KW-0628">Postsynaptic cell membrane</keyword>
<keyword id="KW-1267">Proteomics identification</keyword>
<keyword id="KW-0675">Receptor</keyword>
<keyword id="KW-1185">Reference proteome</keyword>
<keyword id="KW-0732">Signal</keyword>
<keyword id="KW-0770">Synapse</keyword>
<keyword id="KW-0812">Transmembrane</keyword>
<keyword id="KW-1133">Transmembrane helix</keyword>
<keyword id="KW-0813">Transport</keyword>
<feature type="signal peptide" evidence="7">
    <location>
        <begin position="1"/>
        <end position="19"/>
    </location>
</feature>
<feature type="chain" id="PRO_0000000447" description="Gamma-aminobutyric acid receptor subunit alpha-6">
    <location>
        <begin position="20"/>
        <end position="453"/>
    </location>
</feature>
<feature type="topological domain" description="Extracellular" evidence="11">
    <location>
        <begin position="20"/>
        <end position="243"/>
    </location>
</feature>
<feature type="transmembrane region" description="Helical" evidence="7">
    <location>
        <begin position="244"/>
        <end position="264"/>
    </location>
</feature>
<feature type="topological domain" description="Cytoplasmic" evidence="11">
    <location>
        <begin position="265"/>
        <end position="270"/>
    </location>
</feature>
<feature type="transmembrane region" description="Helical" evidence="7">
    <location>
        <begin position="271"/>
        <end position="290"/>
    </location>
</feature>
<feature type="topological domain" description="Extracellular" evidence="11">
    <location>
        <begin position="291"/>
        <end position="304"/>
    </location>
</feature>
<feature type="transmembrane region" description="Helical" evidence="7">
    <location>
        <begin position="305"/>
        <end position="325"/>
    </location>
</feature>
<feature type="topological domain" description="Cytoplasmic" evidence="11">
    <location>
        <begin position="326"/>
        <end position="422"/>
    </location>
</feature>
<feature type="transmembrane region" description="Helical" evidence="7">
    <location>
        <begin position="423"/>
        <end position="443"/>
    </location>
</feature>
<feature type="topological domain" description="Extracellular" evidence="11">
    <location>
        <begin position="444"/>
        <end position="453"/>
    </location>
</feature>
<feature type="binding site" evidence="2">
    <location>
        <position position="84"/>
    </location>
    <ligand>
        <name>4-aminobutanoate</name>
        <dbReference type="ChEBI" id="CHEBI:59888"/>
        <note>ligand shared with the neighboring beta subunit</note>
    </ligand>
</feature>
<feature type="binding site" evidence="6">
    <location>
        <position position="147"/>
    </location>
    <ligand>
        <name>4-aminobutanoate</name>
        <dbReference type="ChEBI" id="CHEBI:59888"/>
        <note>ligand shared with the neighboring beta subunit</note>
    </ligand>
</feature>
<feature type="modified residue" description="Phosphothreonine" evidence="5">
    <location>
        <position position="403"/>
    </location>
</feature>
<feature type="glycosylation site" description="N-linked (GlcNAc...) asparagine" evidence="7">
    <location>
        <position position="31"/>
    </location>
</feature>
<feature type="glycosylation site" description="N-linked (GlcNAc...) asparagine" evidence="7">
    <location>
        <position position="128"/>
    </location>
</feature>
<feature type="glycosylation site" description="N-linked (GlcNAc...) asparagine" evidence="7">
    <location>
        <position position="141"/>
    </location>
</feature>
<feature type="disulfide bond" evidence="4">
    <location>
        <begin position="156"/>
        <end position="170"/>
    </location>
</feature>
<feature type="sequence variant" id="VAR_036033" description="In a colorectal cancer sample; somatic mutation." evidence="8">
    <original>P</original>
    <variation>H</variation>
    <location>
        <position position="180"/>
    </location>
</feature>
<feature type="sequence variant" id="VAR_036782" description="In dbSNP:rs3811993.">
    <original>T</original>
    <variation>M</variation>
    <location>
        <position position="187"/>
    </location>
</feature>
<feature type="sequence variant" id="VAR_036783" description="In dbSNP:rs34907804.">
    <original>P</original>
    <variation>S</variation>
    <location>
        <position position="404"/>
    </location>
</feature>
<feature type="sequence conflict" description="In Ref. 1; AAB36480." evidence="11" ref="1">
    <original>S</original>
    <variation>P</variation>
    <location>
        <position position="408"/>
    </location>
</feature>
<proteinExistence type="evidence at protein level"/>
<comment type="function">
    <text evidence="1 2 5 9">Alpha subunit of the heteropentameric ligand-gated chloride channel gated by gamma-aminobutyric acid (GABA), a major inhibitory neurotransmitter in the brain (PubMed:8632757). GABA-gated chloride channels, also named GABA(A) receptors (GABAAR), consist of five subunits arranged around a central pore and contain GABA active binding site(s) located at the alpha and beta subunit interface(s) (By similarity). When activated by GABA, GABAARs selectively allow the flow of chloride anions across the cell membrane down their electrochemical gradient (By similarity). Alpha-6/GABRA6 subunits are found at both synaptic and extrasynaptic sites (PubMed:8632757). Chloride influx into the postsynaptic neuron following GABAAR opening decreases the neuron ability to generate a new action potential, thereby reducing nerve transmission (By similarity). Extrasynaptic alpha-6-containing receptors contribute to the tonic GABAergic inhibition. Alpha-6 subunits are also present on glutamatergic synapses (By similarity).</text>
</comment>
<comment type="catalytic activity">
    <reaction evidence="1">
        <text>chloride(in) = chloride(out)</text>
        <dbReference type="Rhea" id="RHEA:29823"/>
        <dbReference type="ChEBI" id="CHEBI:17996"/>
    </reaction>
</comment>
<comment type="subunit">
    <text evidence="2 3">Heteropentamer, formed by a combination of alpha (GABRA1-6), beta (GABRB1-3), gamma (GABRG1-3), delta (GABRD), epsilon (GABRE), rho (GABRR1-3), pi (GABRP) and theta (GABRQ) chains, each subunit exhibiting distinct physiological and pharmacological properties (By similarity). Binds UBQLN1 (By similarity).</text>
</comment>
<comment type="subcellular location">
    <subcellularLocation>
        <location evidence="5">Postsynaptic cell membrane</location>
        <topology evidence="7">Multi-pass membrane protein</topology>
    </subcellularLocation>
    <subcellularLocation>
        <location evidence="5">Cell membrane</location>
        <topology evidence="7">Multi-pass membrane protein</topology>
    </subcellularLocation>
</comment>
<comment type="tissue specificity">
    <text evidence="9">Expressed in brain, in cerebellar granule cells.</text>
</comment>
<comment type="domain">
    <text evidence="2">GABAARs subunits share a common topological structure: a peptide sequence made up of a long extracellular N-terminal, four transmembrane domains, intracellular or cytoplasmic domain located between the third and the fourth transmembrane domains.</text>
</comment>
<comment type="similarity">
    <text evidence="11">Belongs to the ligand-gated ion channel (TC 1.A.9) family. Gamma-aminobutyric acid receptor (TC 1.A.9.5) subfamily. GABRA6 sub-subfamily.</text>
</comment>
<comment type="online information" name="Protein Spotlight">
    <link uri="https://www.proteinspotlight.org/back_issues/056"/>
    <text>Forbidden fruit - Issue 56 of March 2005</text>
</comment>
<accession>Q16445</accession>
<accession>A8K096</accession>
<accession>Q4VAV2</accession>
<dbReference type="EMBL" id="S81944">
    <property type="protein sequence ID" value="AAB36480.1"/>
    <property type="molecule type" value="mRNA"/>
</dbReference>
<dbReference type="EMBL" id="AK289461">
    <property type="protein sequence ID" value="BAF82150.1"/>
    <property type="molecule type" value="mRNA"/>
</dbReference>
<dbReference type="EMBL" id="CH471062">
    <property type="protein sequence ID" value="EAW61542.1"/>
    <property type="molecule type" value="Genomic_DNA"/>
</dbReference>
<dbReference type="EMBL" id="BC096241">
    <property type="protein sequence ID" value="AAH96241.1"/>
    <property type="molecule type" value="mRNA"/>
</dbReference>
<dbReference type="EMBL" id="BC096242">
    <property type="protein sequence ID" value="AAH96242.1"/>
    <property type="molecule type" value="mRNA"/>
</dbReference>
<dbReference type="EMBL" id="BC099640">
    <property type="protein sequence ID" value="AAH99640.1"/>
    <property type="molecule type" value="mRNA"/>
</dbReference>
<dbReference type="EMBL" id="BC099641">
    <property type="protein sequence ID" value="AAH99641.1"/>
    <property type="molecule type" value="mRNA"/>
</dbReference>
<dbReference type="CCDS" id="CCDS4356.1"/>
<dbReference type="RefSeq" id="NP_000802.2">
    <property type="nucleotide sequence ID" value="NM_000811.3"/>
</dbReference>
<dbReference type="SMR" id="Q16445"/>
<dbReference type="BioGRID" id="108833">
    <property type="interactions" value="20"/>
</dbReference>
<dbReference type="ComplexPortal" id="CPX-2164">
    <property type="entry name" value="GABA-A receptor, alpha6-beta3-gamma2"/>
</dbReference>
<dbReference type="ComplexPortal" id="CPX-2951">
    <property type="entry name" value="GABA-A receptor, alpha-6/beta-3/delta"/>
</dbReference>
<dbReference type="ComplexPortal" id="CPX-2952">
    <property type="entry name" value="GABA-A receptor, alpha6-beta2-delta"/>
</dbReference>
<dbReference type="ComplexPortal" id="CPX-8581">
    <property type="entry name" value="GABA-A receptor alpha6-beta2-gamma2"/>
</dbReference>
<dbReference type="ComplexPortal" id="CPX-8727">
    <property type="entry name" value="GABA-A receptor alpha6-beta1-gamma2 complex"/>
</dbReference>
<dbReference type="FunCoup" id="Q16445">
    <property type="interactions" value="636"/>
</dbReference>
<dbReference type="IntAct" id="Q16445">
    <property type="interactions" value="11"/>
</dbReference>
<dbReference type="STRING" id="9606.ENSP00000274545"/>
<dbReference type="BindingDB" id="Q16445"/>
<dbReference type="ChEMBL" id="CHEMBL2579"/>
<dbReference type="DrugBank" id="DB12537">
    <property type="generic name" value="1,2-Benzodiazepine"/>
</dbReference>
<dbReference type="DrugBank" id="DB00546">
    <property type="generic name" value="Adinazolam"/>
</dbReference>
<dbReference type="DrugBank" id="DB00404">
    <property type="generic name" value="Alprazolam"/>
</dbReference>
<dbReference type="DrugBank" id="DB01351">
    <property type="generic name" value="Amobarbital"/>
</dbReference>
<dbReference type="DrugBank" id="DB00543">
    <property type="generic name" value="Amoxapine"/>
</dbReference>
<dbReference type="DrugBank" id="DB11901">
    <property type="generic name" value="Apalutamide"/>
</dbReference>
<dbReference type="DrugBank" id="DB01352">
    <property type="generic name" value="Aprobarbital"/>
</dbReference>
<dbReference type="DrugBank" id="DB01483">
    <property type="generic name" value="Barbital"/>
</dbReference>
<dbReference type="DrugBank" id="DB14719">
    <property type="generic name" value="Bentazepam"/>
</dbReference>
<dbReference type="DrugBank" id="DB11859">
    <property type="generic name" value="Brexanolone"/>
</dbReference>
<dbReference type="DrugBank" id="DB01558">
    <property type="generic name" value="Bromazepam"/>
</dbReference>
<dbReference type="DrugBank" id="DB09017">
    <property type="generic name" value="Brotizolam"/>
</dbReference>
<dbReference type="DrugBank" id="DB00237">
    <property type="generic name" value="Butabarbital"/>
</dbReference>
<dbReference type="DrugBank" id="DB00241">
    <property type="generic name" value="Butalbital"/>
</dbReference>
<dbReference type="DrugBank" id="DB01353">
    <property type="generic name" value="Butobarbital"/>
</dbReference>
<dbReference type="DrugBank" id="DB01489">
    <property type="generic name" value="Camazepam"/>
</dbReference>
<dbReference type="DrugBank" id="DB00475">
    <property type="generic name" value="Chlordiazepoxide"/>
</dbReference>
<dbReference type="DrugBank" id="DB14715">
    <property type="generic name" value="Cinazepam"/>
</dbReference>
<dbReference type="DrugBank" id="DB01594">
    <property type="generic name" value="Cinolazepam"/>
</dbReference>
<dbReference type="DrugBank" id="DB00349">
    <property type="generic name" value="Clobazam"/>
</dbReference>
<dbReference type="DrugBank" id="DB01068">
    <property type="generic name" value="Clonazepam"/>
</dbReference>
<dbReference type="DrugBank" id="DB00628">
    <property type="generic name" value="Clorazepic acid"/>
</dbReference>
<dbReference type="DrugBank" id="DB01559">
    <property type="generic name" value="Clotiazepam"/>
</dbReference>
<dbReference type="DrugBank" id="DB01553">
    <property type="generic name" value="Cloxazolam"/>
</dbReference>
<dbReference type="DrugBank" id="DB01511">
    <property type="generic name" value="Delorazepam"/>
</dbReference>
<dbReference type="DrugBank" id="DB01189">
    <property type="generic name" value="Desflurane"/>
</dbReference>
<dbReference type="DrugBank" id="DB00829">
    <property type="generic name" value="Diazepam"/>
</dbReference>
<dbReference type="DrugBank" id="DB01496">
    <property type="generic name" value="Dihydro-2-thioxo-5-((5-(2-(trifluoromethyl)phenyl)-2-furanyl)methyl)-4,6(1H,5H)-pyrimidinedione"/>
</dbReference>
<dbReference type="DrugBank" id="DB13837">
    <property type="generic name" value="Doxefazepam"/>
</dbReference>
<dbReference type="DrugBank" id="DB00228">
    <property type="generic name" value="Enflurane"/>
</dbReference>
<dbReference type="DrugBank" id="DB01215">
    <property type="generic name" value="Estazolam"/>
</dbReference>
<dbReference type="DrugBank" id="DB00402">
    <property type="generic name" value="Eszopiclone"/>
</dbReference>
<dbReference type="DrugBank" id="DB00898">
    <property type="generic name" value="Ethanol"/>
</dbReference>
<dbReference type="DrugBank" id="DB00189">
    <property type="generic name" value="Ethchlorvynol"/>
</dbReference>
<dbReference type="DrugBank" id="DB01545">
    <property type="generic name" value="Ethyl loflazepate"/>
</dbReference>
<dbReference type="DrugBank" id="DB09166">
    <property type="generic name" value="Etizolam"/>
</dbReference>
<dbReference type="DrugBank" id="DB00292">
    <property type="generic name" value="Etomidate"/>
</dbReference>
<dbReference type="DrugBank" id="DB01205">
    <property type="generic name" value="Flumazenil"/>
</dbReference>
<dbReference type="DrugBank" id="DB01544">
    <property type="generic name" value="Flunitrazepam"/>
</dbReference>
<dbReference type="DrugBank" id="DB00690">
    <property type="generic name" value="Flurazepam"/>
</dbReference>
<dbReference type="DrugBank" id="DB05087">
    <property type="generic name" value="Ganaxolone"/>
</dbReference>
<dbReference type="DrugBank" id="DB01437">
    <property type="generic name" value="Glutethimide"/>
</dbReference>
<dbReference type="DrugBank" id="DB00801">
    <property type="generic name" value="Halazepam"/>
</dbReference>
<dbReference type="DrugBank" id="DB01159">
    <property type="generic name" value="Halothane"/>
</dbReference>
<dbReference type="DrugBank" id="DB01354">
    <property type="generic name" value="Heptabarbital"/>
</dbReference>
<dbReference type="DrugBank" id="DB01355">
    <property type="generic name" value="Hexobarbital"/>
</dbReference>
<dbReference type="DrugBank" id="DB00753">
    <property type="generic name" value="Isoflurane"/>
</dbReference>
<dbReference type="DrugBank" id="DB01587">
    <property type="generic name" value="Ketazolam"/>
</dbReference>
<dbReference type="DrugBank" id="DB00555">
    <property type="generic name" value="Lamotrigine"/>
</dbReference>
<dbReference type="DrugBank" id="DB13643">
    <property type="generic name" value="Loprazolam"/>
</dbReference>
<dbReference type="DrugBank" id="DB00186">
    <property type="generic name" value="Lorazepam"/>
</dbReference>
<dbReference type="DrugBank" id="DB13872">
    <property type="generic name" value="Lormetazepam"/>
</dbReference>
<dbReference type="DrugBank" id="DB13437">
    <property type="generic name" value="Medazepam"/>
</dbReference>
<dbReference type="DrugBank" id="DB00603">
    <property type="generic name" value="Medroxyprogesterone acetate"/>
</dbReference>
<dbReference type="DrugBank" id="DB01043">
    <property type="generic name" value="Memantine"/>
</dbReference>
<dbReference type="DrugBank" id="DB00371">
    <property type="generic name" value="Meprobamate"/>
</dbReference>
<dbReference type="DrugBank" id="DB00463">
    <property type="generic name" value="Metharbital"/>
</dbReference>
<dbReference type="DrugBank" id="DB01028">
    <property type="generic name" value="Methoxyflurane"/>
</dbReference>
<dbReference type="DrugBank" id="DB00849">
    <property type="generic name" value="Methylphenobarbital"/>
</dbReference>
<dbReference type="DrugBank" id="DB01107">
    <property type="generic name" value="Methyprylon"/>
</dbReference>
<dbReference type="DrugBank" id="DB15489">
    <property type="generic name" value="Mexazolam"/>
</dbReference>
<dbReference type="DrugBank" id="DB00683">
    <property type="generic name" value="Midazolam"/>
</dbReference>
<dbReference type="DrugBank" id="DB01595">
    <property type="generic name" value="Nitrazepam"/>
</dbReference>
<dbReference type="DrugBank" id="DB14028">
    <property type="generic name" value="Nordazepam"/>
</dbReference>
<dbReference type="DrugBank" id="DB00842">
    <property type="generic name" value="Oxazepam"/>
</dbReference>
<dbReference type="DrugBank" id="DB14672">
    <property type="generic name" value="Oxazepam acetate"/>
</dbReference>
<dbReference type="DrugBank" id="DB00312">
    <property type="generic name" value="Pentobarbital"/>
</dbReference>
<dbReference type="DrugBank" id="DB00252">
    <property type="generic name" value="Phenytoin"/>
</dbReference>
<dbReference type="DrugBank" id="DB13335">
    <property type="generic name" value="Pinazepam"/>
</dbReference>
<dbReference type="DrugBank" id="DB01708">
    <property type="generic name" value="Prasterone"/>
</dbReference>
<dbReference type="DrugBank" id="DB01588">
    <property type="generic name" value="Prazepam"/>
</dbReference>
<dbReference type="DrugBank" id="DB00794">
    <property type="generic name" value="Primidone"/>
</dbReference>
<dbReference type="DrugBank" id="DB00818">
    <property type="generic name" value="Propofol"/>
</dbReference>
<dbReference type="DrugBank" id="DB01589">
    <property type="generic name" value="Quazepam"/>
</dbReference>
<dbReference type="DrugBank" id="DB12404">
    <property type="generic name" value="Remimazolam"/>
</dbReference>
<dbReference type="DrugBank" id="DB00418">
    <property type="generic name" value="Secobarbital"/>
</dbReference>
<dbReference type="DrugBank" id="DB01236">
    <property type="generic name" value="Sevoflurane"/>
</dbReference>
<dbReference type="DrugBank" id="DB09118">
    <property type="generic name" value="Stiripentol"/>
</dbReference>
<dbReference type="DrugBank" id="DB00306">
    <property type="generic name" value="Talbutal"/>
</dbReference>
<dbReference type="DrugBank" id="DB01956">
    <property type="generic name" value="Taurine"/>
</dbReference>
<dbReference type="DrugBank" id="DB00231">
    <property type="generic name" value="Temazepam"/>
</dbReference>
<dbReference type="DrugBank" id="DB11582">
    <property type="generic name" value="Thiocolchicoside"/>
</dbReference>
<dbReference type="DrugBank" id="DB00599">
    <property type="generic name" value="Thiopental"/>
</dbReference>
<dbReference type="DrugBank" id="DB00897">
    <property type="generic name" value="Triazolam"/>
</dbReference>
<dbReference type="DrugBank" id="DB15490">
    <property type="generic name" value="Zuranolone"/>
</dbReference>
<dbReference type="DrugCentral" id="Q16445"/>
<dbReference type="GuidetoPHARMACOLOGY" id="409"/>
<dbReference type="GlyCosmos" id="Q16445">
    <property type="glycosylation" value="3 sites, No reported glycans"/>
</dbReference>
<dbReference type="GlyGen" id="Q16445">
    <property type="glycosylation" value="5 sites, 1 O-linked glycan (1 site)"/>
</dbReference>
<dbReference type="iPTMnet" id="Q16445"/>
<dbReference type="PhosphoSitePlus" id="Q16445"/>
<dbReference type="BioMuta" id="GABRA6"/>
<dbReference type="DMDM" id="126302548"/>
<dbReference type="MassIVE" id="Q16445"/>
<dbReference type="PaxDb" id="9606-ENSP00000274545"/>
<dbReference type="PeptideAtlas" id="Q16445"/>
<dbReference type="ProteomicsDB" id="60871"/>
<dbReference type="Antibodypedia" id="28560">
    <property type="antibodies" value="200 antibodies from 34 providers"/>
</dbReference>
<dbReference type="DNASU" id="2559"/>
<dbReference type="Ensembl" id="ENST00000274545.10">
    <property type="protein sequence ID" value="ENSP00000274545.5"/>
    <property type="gene ID" value="ENSG00000145863.11"/>
</dbReference>
<dbReference type="GeneID" id="2559"/>
<dbReference type="KEGG" id="hsa:2559"/>
<dbReference type="MANE-Select" id="ENST00000274545.10">
    <property type="protein sequence ID" value="ENSP00000274545.5"/>
    <property type="RefSeq nucleotide sequence ID" value="NM_000811.3"/>
    <property type="RefSeq protein sequence ID" value="NP_000802.2"/>
</dbReference>
<dbReference type="UCSC" id="uc003lyu.3">
    <property type="organism name" value="human"/>
</dbReference>
<dbReference type="AGR" id="HGNC:4080"/>
<dbReference type="CTD" id="2559"/>
<dbReference type="DisGeNET" id="2559"/>
<dbReference type="GeneCards" id="GABRA6"/>
<dbReference type="HGNC" id="HGNC:4080">
    <property type="gene designation" value="GABRA6"/>
</dbReference>
<dbReference type="HPA" id="ENSG00000145863">
    <property type="expression patterns" value="Tissue enriched (brain)"/>
</dbReference>
<dbReference type="MalaCards" id="GABRA6"/>
<dbReference type="MIM" id="137143">
    <property type="type" value="gene"/>
</dbReference>
<dbReference type="neXtProt" id="NX_Q16445"/>
<dbReference type="OpenTargets" id="ENSG00000145863"/>
<dbReference type="PharmGKB" id="PA28494"/>
<dbReference type="VEuPathDB" id="HostDB:ENSG00000145863"/>
<dbReference type="eggNOG" id="KOG3642">
    <property type="taxonomic scope" value="Eukaryota"/>
</dbReference>
<dbReference type="GeneTree" id="ENSGT00940000156722"/>
<dbReference type="HOGENOM" id="CLU_010920_2_2_1"/>
<dbReference type="InParanoid" id="Q16445"/>
<dbReference type="OMA" id="DSRYHLK"/>
<dbReference type="OrthoDB" id="203862at2759"/>
<dbReference type="PAN-GO" id="Q16445">
    <property type="GO annotations" value="19 GO annotations based on evolutionary models"/>
</dbReference>
<dbReference type="PhylomeDB" id="Q16445"/>
<dbReference type="TreeFam" id="TF315453"/>
<dbReference type="PathwayCommons" id="Q16445"/>
<dbReference type="Reactome" id="R-HSA-977443">
    <property type="pathway name" value="GABA receptor activation"/>
</dbReference>
<dbReference type="SignaLink" id="Q16445"/>
<dbReference type="SIGNOR" id="Q16445"/>
<dbReference type="BioGRID-ORCS" id="2559">
    <property type="hits" value="5 hits in 1152 CRISPR screens"/>
</dbReference>
<dbReference type="ChiTaRS" id="GABRA6">
    <property type="organism name" value="human"/>
</dbReference>
<dbReference type="GeneWiki" id="GABRA6"/>
<dbReference type="GenomeRNAi" id="2559"/>
<dbReference type="Pharos" id="Q16445">
    <property type="development level" value="Tclin"/>
</dbReference>
<dbReference type="PRO" id="PR:Q16445"/>
<dbReference type="Proteomes" id="UP000005640">
    <property type="component" value="Chromosome 5"/>
</dbReference>
<dbReference type="RNAct" id="Q16445">
    <property type="molecule type" value="protein"/>
</dbReference>
<dbReference type="Bgee" id="ENSG00000145863">
    <property type="expression patterns" value="Expressed in cerebellar vermis and 84 other cell types or tissues"/>
</dbReference>
<dbReference type="ExpressionAtlas" id="Q16445">
    <property type="expression patterns" value="baseline and differential"/>
</dbReference>
<dbReference type="GO" id="GO:0099192">
    <property type="term" value="C:cerebellar Golgi cell to granule cell synapse"/>
    <property type="evidence" value="ECO:0007669"/>
    <property type="project" value="Ensembl"/>
</dbReference>
<dbReference type="GO" id="GO:0034707">
    <property type="term" value="C:chloride channel complex"/>
    <property type="evidence" value="ECO:0007669"/>
    <property type="project" value="UniProtKB-KW"/>
</dbReference>
<dbReference type="GO" id="GO:0032590">
    <property type="term" value="C:dendrite membrane"/>
    <property type="evidence" value="ECO:0000318"/>
    <property type="project" value="GO_Central"/>
</dbReference>
<dbReference type="GO" id="GO:1902711">
    <property type="term" value="C:GABA-A receptor complex"/>
    <property type="evidence" value="ECO:0000250"/>
    <property type="project" value="ComplexPortal"/>
</dbReference>
<dbReference type="GO" id="GO:0005886">
    <property type="term" value="C:plasma membrane"/>
    <property type="evidence" value="ECO:0000250"/>
    <property type="project" value="UniProtKB"/>
</dbReference>
<dbReference type="GO" id="GO:0098794">
    <property type="term" value="C:postsynapse"/>
    <property type="evidence" value="ECO:0000318"/>
    <property type="project" value="GO_Central"/>
</dbReference>
<dbReference type="GO" id="GO:0099634">
    <property type="term" value="C:postsynaptic specialization membrane"/>
    <property type="evidence" value="ECO:0000250"/>
    <property type="project" value="UniProtKB"/>
</dbReference>
<dbReference type="GO" id="GO:0008503">
    <property type="term" value="F:benzodiazepine receptor activity"/>
    <property type="evidence" value="ECO:0000304"/>
    <property type="project" value="ProtInc"/>
</dbReference>
<dbReference type="GO" id="GO:0004890">
    <property type="term" value="F:GABA-A receptor activity"/>
    <property type="evidence" value="ECO:0007669"/>
    <property type="project" value="InterPro"/>
</dbReference>
<dbReference type="GO" id="GO:0022851">
    <property type="term" value="F:GABA-gated chloride ion channel activity"/>
    <property type="evidence" value="ECO:0000318"/>
    <property type="project" value="GO_Central"/>
</dbReference>
<dbReference type="GO" id="GO:1904315">
    <property type="term" value="F:transmitter-gated monoatomic ion channel activity involved in regulation of postsynaptic membrane potential"/>
    <property type="evidence" value="ECO:0007669"/>
    <property type="project" value="Ensembl"/>
</dbReference>
<dbReference type="GO" id="GO:1902476">
    <property type="term" value="P:chloride transmembrane transport"/>
    <property type="evidence" value="ECO:0000318"/>
    <property type="project" value="GO_Central"/>
</dbReference>
<dbReference type="GO" id="GO:0007214">
    <property type="term" value="P:gamma-aminobutyric acid signaling pathway"/>
    <property type="evidence" value="ECO:0000318"/>
    <property type="project" value="GO_Central"/>
</dbReference>
<dbReference type="GO" id="GO:1904862">
    <property type="term" value="P:inhibitory synapse assembly"/>
    <property type="evidence" value="ECO:0000318"/>
    <property type="project" value="GO_Central"/>
</dbReference>
<dbReference type="GO" id="GO:0007165">
    <property type="term" value="P:signal transduction"/>
    <property type="evidence" value="ECO:0000304"/>
    <property type="project" value="ProtInc"/>
</dbReference>
<dbReference type="GO" id="GO:0051932">
    <property type="term" value="P:synaptic transmission, GABAergic"/>
    <property type="evidence" value="ECO:0000318"/>
    <property type="project" value="GO_Central"/>
</dbReference>
<dbReference type="CDD" id="cd19039">
    <property type="entry name" value="LGIC_ECD_GABAAR_A6"/>
    <property type="match status" value="1"/>
</dbReference>
<dbReference type="CDD" id="cd19052">
    <property type="entry name" value="LGIC_TM_GABAAR_alpha"/>
    <property type="match status" value="1"/>
</dbReference>
<dbReference type="FunFam" id="2.70.170.10:FF:000001">
    <property type="entry name" value="Gamma-aminobutyric acid A receptor subunit alpha-2"/>
    <property type="match status" value="1"/>
</dbReference>
<dbReference type="FunFam" id="1.20.58.390:FF:000002">
    <property type="entry name" value="Putative gamma-aminobutyric acid receptor subunit alpha-5"/>
    <property type="match status" value="1"/>
</dbReference>
<dbReference type="Gene3D" id="2.70.170.10">
    <property type="entry name" value="Neurotransmitter-gated ion-channel ligand-binding domain"/>
    <property type="match status" value="1"/>
</dbReference>
<dbReference type="Gene3D" id="1.20.58.390">
    <property type="entry name" value="Neurotransmitter-gated ion-channel transmembrane domain"/>
    <property type="match status" value="1"/>
</dbReference>
<dbReference type="InterPro" id="IPR006028">
    <property type="entry name" value="GABAA/Glycine_rcpt"/>
</dbReference>
<dbReference type="InterPro" id="IPR001390">
    <property type="entry name" value="GABAAa_rcpt"/>
</dbReference>
<dbReference type="InterPro" id="IPR005436">
    <property type="entry name" value="GABBAa6_rcpt"/>
</dbReference>
<dbReference type="InterPro" id="IPR047024">
    <property type="entry name" value="Gabra-1-6_TM"/>
</dbReference>
<dbReference type="InterPro" id="IPR006202">
    <property type="entry name" value="Neur_chan_lig-bd"/>
</dbReference>
<dbReference type="InterPro" id="IPR036734">
    <property type="entry name" value="Neur_chan_lig-bd_sf"/>
</dbReference>
<dbReference type="InterPro" id="IPR006201">
    <property type="entry name" value="Neur_channel"/>
</dbReference>
<dbReference type="InterPro" id="IPR036719">
    <property type="entry name" value="Neuro-gated_channel_TM_sf"/>
</dbReference>
<dbReference type="InterPro" id="IPR038050">
    <property type="entry name" value="Neuro_actylchol_rec"/>
</dbReference>
<dbReference type="InterPro" id="IPR006029">
    <property type="entry name" value="Neurotrans-gated_channel_TM"/>
</dbReference>
<dbReference type="InterPro" id="IPR018000">
    <property type="entry name" value="Neurotransmitter_ion_chnl_CS"/>
</dbReference>
<dbReference type="NCBIfam" id="TIGR00860">
    <property type="entry name" value="LIC"/>
    <property type="match status" value="1"/>
</dbReference>
<dbReference type="PANTHER" id="PTHR18945">
    <property type="entry name" value="NEUROTRANSMITTER GATED ION CHANNEL"/>
    <property type="match status" value="1"/>
</dbReference>
<dbReference type="Pfam" id="PF02931">
    <property type="entry name" value="Neur_chan_LBD"/>
    <property type="match status" value="1"/>
</dbReference>
<dbReference type="Pfam" id="PF02932">
    <property type="entry name" value="Neur_chan_memb"/>
    <property type="match status" value="1"/>
</dbReference>
<dbReference type="PRINTS" id="PR01079">
    <property type="entry name" value="GABAARALPHA"/>
</dbReference>
<dbReference type="PRINTS" id="PR01619">
    <property type="entry name" value="GABAARALPHA6"/>
</dbReference>
<dbReference type="PRINTS" id="PR00253">
    <property type="entry name" value="GABAARECEPTR"/>
</dbReference>
<dbReference type="PRINTS" id="PR00252">
    <property type="entry name" value="NRIONCHANNEL"/>
</dbReference>
<dbReference type="SUPFAM" id="SSF90112">
    <property type="entry name" value="Neurotransmitter-gated ion-channel transmembrane pore"/>
    <property type="match status" value="1"/>
</dbReference>
<dbReference type="SUPFAM" id="SSF63712">
    <property type="entry name" value="Nicotinic receptor ligand binding domain-like"/>
    <property type="match status" value="1"/>
</dbReference>
<dbReference type="PROSITE" id="PS00236">
    <property type="entry name" value="NEUROTR_ION_CHANNEL"/>
    <property type="match status" value="1"/>
</dbReference>
<organism>
    <name type="scientific">Homo sapiens</name>
    <name type="common">Human</name>
    <dbReference type="NCBI Taxonomy" id="9606"/>
    <lineage>
        <taxon>Eukaryota</taxon>
        <taxon>Metazoa</taxon>
        <taxon>Chordata</taxon>
        <taxon>Craniata</taxon>
        <taxon>Vertebrata</taxon>
        <taxon>Euteleostomi</taxon>
        <taxon>Mammalia</taxon>
        <taxon>Eutheria</taxon>
        <taxon>Euarchontoglires</taxon>
        <taxon>Primates</taxon>
        <taxon>Haplorrhini</taxon>
        <taxon>Catarrhini</taxon>
        <taxon>Hominidae</taxon>
        <taxon>Homo</taxon>
    </lineage>
</organism>
<evidence type="ECO:0000250" key="1">
    <source>
        <dbReference type="UniProtKB" id="P08219"/>
    </source>
</evidence>
<evidence type="ECO:0000250" key="2">
    <source>
        <dbReference type="UniProtKB" id="P14867"/>
    </source>
</evidence>
<evidence type="ECO:0000250" key="3">
    <source>
        <dbReference type="UniProtKB" id="P16305"/>
    </source>
</evidence>
<evidence type="ECO:0000250" key="4">
    <source>
        <dbReference type="UniProtKB" id="P28472"/>
    </source>
</evidence>
<evidence type="ECO:0000250" key="5">
    <source>
        <dbReference type="UniProtKB" id="P30191"/>
    </source>
</evidence>
<evidence type="ECO:0000250" key="6">
    <source>
        <dbReference type="UniProtKB" id="P62813"/>
    </source>
</evidence>
<evidence type="ECO:0000255" key="7"/>
<evidence type="ECO:0000269" key="8">
    <source>
    </source>
</evidence>
<evidence type="ECO:0000269" key="9">
    <source>
    </source>
</evidence>
<evidence type="ECO:0000303" key="10">
    <source>
    </source>
</evidence>
<evidence type="ECO:0000305" key="11"/>
<evidence type="ECO:0000312" key="12">
    <source>
        <dbReference type="HGNC" id="HGNC:4080"/>
    </source>
</evidence>
<sequence length="453" mass="51024">MASSLPWLCIILWLENALGKLEVEGNFYSENVSRILDNLLEGYDNRLRPGFGGAVTEVKTDIYVTSFGPVSDVEMEYTMDVFFRQTWTDERLKFGGPTEILSLNNLMVSKIWTPDTFFRNGKKSIAHNMTTPNKLFRIMQNGTILYTMRLTINADCPMRLVNFPMDGHACPLKFGSYAYPKSEIIYTWKKGPLYSVEVPEESSSLLQYDLIGQTVSSETIKSNTGEYVIMTVYFHLQRKMGYFMIQIYTPCIMTVILSQVSFWINKESVPARTVFGITTVLTMTTLSISARHSLPKVSYATAMDWFIAVCFAFVFSALIEFAAVNYFTNLQTQKAKRKAQFAAPPTVTISKATEPLEAEIVLHPDSKYHLKKRITSLSLPIVSSSEANKVLTRAPILQSTPVTPPPLSPAFGGTSKIDQYSRILFPVAFAGFNLVYWVVYLSKDTMEVSSSVE</sequence>
<name>GBRA6_HUMAN</name>